<evidence type="ECO:0000255" key="1">
    <source>
        <dbReference type="HAMAP-Rule" id="MF_00209"/>
    </source>
</evidence>
<protein>
    <recommendedName>
        <fullName evidence="1">Inorganic pyrophosphatase</fullName>
        <ecNumber evidence="1">3.6.1.1</ecNumber>
    </recommendedName>
    <alternativeName>
        <fullName evidence="1">Pyrophosphate phospho-hydrolase</fullName>
        <shortName evidence="1">PPase</shortName>
    </alternativeName>
</protein>
<proteinExistence type="inferred from homology"/>
<accession>Q9AC20</accession>
<feature type="chain" id="PRO_0000137488" description="Inorganic pyrophosphatase">
    <location>
        <begin position="1"/>
        <end position="177"/>
    </location>
</feature>
<feature type="binding site" evidence="1">
    <location>
        <position position="30"/>
    </location>
    <ligand>
        <name>substrate</name>
    </ligand>
</feature>
<feature type="binding site" evidence="1">
    <location>
        <position position="44"/>
    </location>
    <ligand>
        <name>substrate</name>
    </ligand>
</feature>
<feature type="binding site" evidence="1">
    <location>
        <position position="56"/>
    </location>
    <ligand>
        <name>substrate</name>
    </ligand>
</feature>
<feature type="binding site" evidence="1">
    <location>
        <position position="66"/>
    </location>
    <ligand>
        <name>Mg(2+)</name>
        <dbReference type="ChEBI" id="CHEBI:18420"/>
        <label>1</label>
    </ligand>
</feature>
<feature type="binding site" evidence="1">
    <location>
        <position position="71"/>
    </location>
    <ligand>
        <name>Mg(2+)</name>
        <dbReference type="ChEBI" id="CHEBI:18420"/>
        <label>1</label>
    </ligand>
</feature>
<feature type="binding site" evidence="1">
    <location>
        <position position="71"/>
    </location>
    <ligand>
        <name>Mg(2+)</name>
        <dbReference type="ChEBI" id="CHEBI:18420"/>
        <label>2</label>
    </ligand>
</feature>
<feature type="binding site" evidence="1">
    <location>
        <position position="103"/>
    </location>
    <ligand>
        <name>Mg(2+)</name>
        <dbReference type="ChEBI" id="CHEBI:18420"/>
        <label>1</label>
    </ligand>
</feature>
<feature type="binding site" evidence="1">
    <location>
        <position position="142"/>
    </location>
    <ligand>
        <name>substrate</name>
    </ligand>
</feature>
<name>IPYR_CAUVC</name>
<organism>
    <name type="scientific">Caulobacter vibrioides (strain ATCC 19089 / CIP 103742 / CB 15)</name>
    <name type="common">Caulobacter crescentus</name>
    <dbReference type="NCBI Taxonomy" id="190650"/>
    <lineage>
        <taxon>Bacteria</taxon>
        <taxon>Pseudomonadati</taxon>
        <taxon>Pseudomonadota</taxon>
        <taxon>Alphaproteobacteria</taxon>
        <taxon>Caulobacterales</taxon>
        <taxon>Caulobacteraceae</taxon>
        <taxon>Caulobacter</taxon>
    </lineage>
</organism>
<keyword id="KW-0963">Cytoplasm</keyword>
<keyword id="KW-0378">Hydrolase</keyword>
<keyword id="KW-0460">Magnesium</keyword>
<keyword id="KW-0479">Metal-binding</keyword>
<keyword id="KW-1185">Reference proteome</keyword>
<reference key="1">
    <citation type="journal article" date="2001" name="Proc. Natl. Acad. Sci. U.S.A.">
        <title>Complete genome sequence of Caulobacter crescentus.</title>
        <authorList>
            <person name="Nierman W.C."/>
            <person name="Feldblyum T.V."/>
            <person name="Laub M.T."/>
            <person name="Paulsen I.T."/>
            <person name="Nelson K.E."/>
            <person name="Eisen J.A."/>
            <person name="Heidelberg J.F."/>
            <person name="Alley M.R.K."/>
            <person name="Ohta N."/>
            <person name="Maddock J.R."/>
            <person name="Potocka I."/>
            <person name="Nelson W.C."/>
            <person name="Newton A."/>
            <person name="Stephens C."/>
            <person name="Phadke N.D."/>
            <person name="Ely B."/>
            <person name="DeBoy R.T."/>
            <person name="Dodson R.J."/>
            <person name="Durkin A.S."/>
            <person name="Gwinn M.L."/>
            <person name="Haft D.H."/>
            <person name="Kolonay J.F."/>
            <person name="Smit J."/>
            <person name="Craven M.B."/>
            <person name="Khouri H.M."/>
            <person name="Shetty J."/>
            <person name="Berry K.J."/>
            <person name="Utterback T.R."/>
            <person name="Tran K."/>
            <person name="Wolf A.M."/>
            <person name="Vamathevan J.J."/>
            <person name="Ermolaeva M.D."/>
            <person name="White O."/>
            <person name="Salzberg S.L."/>
            <person name="Venter J.C."/>
            <person name="Shapiro L."/>
            <person name="Fraser C.M."/>
        </authorList>
    </citation>
    <scope>NUCLEOTIDE SEQUENCE [LARGE SCALE GENOMIC DNA]</scope>
    <source>
        <strain>ATCC 19089 / CIP 103742 / CB 15</strain>
    </source>
</reference>
<sequence length="177" mass="19634">MDLSKIAVGVNPPYDLNAIIEIPQGGEPVKYEIDKESGALMVDRFLHTAMFYPANYGFIPHTLADDGDPADIMVVGPTPVVPGAIIRCRPIGTLMMVDEAGSDEKILAVPVDKLHPFYTGVTSWRDLPTILTEQIAHFFQHYKDLEKGKSTKISGWADPDETAEIIRTAIKRYNESY</sequence>
<dbReference type="EC" id="3.6.1.1" evidence="1"/>
<dbReference type="EMBL" id="AE005673">
    <property type="protein sequence ID" value="AAK22035.1"/>
    <property type="molecule type" value="Genomic_DNA"/>
</dbReference>
<dbReference type="PIR" id="G87254">
    <property type="entry name" value="G87254"/>
</dbReference>
<dbReference type="RefSeq" id="NP_418867.1">
    <property type="nucleotide sequence ID" value="NC_002696.2"/>
</dbReference>
<dbReference type="RefSeq" id="WP_010917937.1">
    <property type="nucleotide sequence ID" value="NC_002696.2"/>
</dbReference>
<dbReference type="SMR" id="Q9AC20"/>
<dbReference type="STRING" id="190650.CC_0047"/>
<dbReference type="EnsemblBacteria" id="AAK22035">
    <property type="protein sequence ID" value="AAK22035"/>
    <property type="gene ID" value="CC_0047"/>
</dbReference>
<dbReference type="KEGG" id="ccr:CC_0047"/>
<dbReference type="PATRIC" id="fig|190650.5.peg.45"/>
<dbReference type="eggNOG" id="COG0221">
    <property type="taxonomic scope" value="Bacteria"/>
</dbReference>
<dbReference type="HOGENOM" id="CLU_073198_1_0_5"/>
<dbReference type="BioCyc" id="CAULO:CC0047-MONOMER"/>
<dbReference type="Proteomes" id="UP000001816">
    <property type="component" value="Chromosome"/>
</dbReference>
<dbReference type="GO" id="GO:0005737">
    <property type="term" value="C:cytoplasm"/>
    <property type="evidence" value="ECO:0007669"/>
    <property type="project" value="UniProtKB-SubCell"/>
</dbReference>
<dbReference type="GO" id="GO:0004427">
    <property type="term" value="F:inorganic diphosphate phosphatase activity"/>
    <property type="evidence" value="ECO:0007669"/>
    <property type="project" value="UniProtKB-UniRule"/>
</dbReference>
<dbReference type="GO" id="GO:0000287">
    <property type="term" value="F:magnesium ion binding"/>
    <property type="evidence" value="ECO:0007669"/>
    <property type="project" value="UniProtKB-UniRule"/>
</dbReference>
<dbReference type="GO" id="GO:0006796">
    <property type="term" value="P:phosphate-containing compound metabolic process"/>
    <property type="evidence" value="ECO:0007669"/>
    <property type="project" value="InterPro"/>
</dbReference>
<dbReference type="CDD" id="cd00412">
    <property type="entry name" value="pyrophosphatase"/>
    <property type="match status" value="1"/>
</dbReference>
<dbReference type="FunFam" id="3.90.80.10:FF:000003">
    <property type="entry name" value="Inorganic pyrophosphatase"/>
    <property type="match status" value="1"/>
</dbReference>
<dbReference type="Gene3D" id="3.90.80.10">
    <property type="entry name" value="Inorganic pyrophosphatase"/>
    <property type="match status" value="1"/>
</dbReference>
<dbReference type="HAMAP" id="MF_00209">
    <property type="entry name" value="Inorganic_PPase"/>
    <property type="match status" value="1"/>
</dbReference>
<dbReference type="InterPro" id="IPR008162">
    <property type="entry name" value="Pyrophosphatase"/>
</dbReference>
<dbReference type="InterPro" id="IPR036649">
    <property type="entry name" value="Pyrophosphatase_sf"/>
</dbReference>
<dbReference type="NCBIfam" id="NF002317">
    <property type="entry name" value="PRK01250.1"/>
    <property type="match status" value="1"/>
</dbReference>
<dbReference type="PANTHER" id="PTHR10286">
    <property type="entry name" value="INORGANIC PYROPHOSPHATASE"/>
    <property type="match status" value="1"/>
</dbReference>
<dbReference type="Pfam" id="PF00719">
    <property type="entry name" value="Pyrophosphatase"/>
    <property type="match status" value="1"/>
</dbReference>
<dbReference type="SUPFAM" id="SSF50324">
    <property type="entry name" value="Inorganic pyrophosphatase"/>
    <property type="match status" value="1"/>
</dbReference>
<gene>
    <name evidence="1" type="primary">ppa</name>
    <name type="ordered locus">CC_0047</name>
</gene>
<comment type="function">
    <text evidence="1">Catalyzes the hydrolysis of inorganic pyrophosphate (PPi) forming two phosphate ions.</text>
</comment>
<comment type="catalytic activity">
    <reaction evidence="1">
        <text>diphosphate + H2O = 2 phosphate + H(+)</text>
        <dbReference type="Rhea" id="RHEA:24576"/>
        <dbReference type="ChEBI" id="CHEBI:15377"/>
        <dbReference type="ChEBI" id="CHEBI:15378"/>
        <dbReference type="ChEBI" id="CHEBI:33019"/>
        <dbReference type="ChEBI" id="CHEBI:43474"/>
        <dbReference type="EC" id="3.6.1.1"/>
    </reaction>
</comment>
<comment type="cofactor">
    <cofactor evidence="1">
        <name>Mg(2+)</name>
        <dbReference type="ChEBI" id="CHEBI:18420"/>
    </cofactor>
</comment>
<comment type="subunit">
    <text evidence="1">Homohexamer.</text>
</comment>
<comment type="subcellular location">
    <subcellularLocation>
        <location evidence="1">Cytoplasm</location>
    </subcellularLocation>
</comment>
<comment type="similarity">
    <text evidence="1">Belongs to the PPase family.</text>
</comment>